<proteinExistence type="inferred from homology"/>
<sequence length="282" mass="31500">MATYLIGDVHGCYDELIALLHKVEFTPGKDTLWLTGDLVARGPGSLDVLRYVKSLGDSVRLVLGNHDLHLLAVFTGISRNKPKDRLTPLLEAPDADELLNWLRRQPLLQIDEEKKLVMAHAGITPQWDLPTAKDCARDVEAVLSSDSYPFFLDAMYGDMPNNWSPELRGLGRLRFITNAFTRMRFCFPNGQLDMYSKESPEEAPAPLKPWFAIPGPVAEEYSIAFGHWASLEGKGTPEGIYALDTGCCWGGSLTCLRWEDKQYFVQPSNRHKDMGEGEAVAS</sequence>
<gene>
    <name evidence="1" type="primary">apaH</name>
    <name type="ordered locus">SDY_0074</name>
</gene>
<name>APAH_SHIDS</name>
<feature type="chain" id="PRO_1000012098" description="Bis(5'-nucleosyl)-tetraphosphatase, symmetrical">
    <location>
        <begin position="1"/>
        <end position="282"/>
    </location>
</feature>
<evidence type="ECO:0000255" key="1">
    <source>
        <dbReference type="HAMAP-Rule" id="MF_00199"/>
    </source>
</evidence>
<organism>
    <name type="scientific">Shigella dysenteriae serotype 1 (strain Sd197)</name>
    <dbReference type="NCBI Taxonomy" id="300267"/>
    <lineage>
        <taxon>Bacteria</taxon>
        <taxon>Pseudomonadati</taxon>
        <taxon>Pseudomonadota</taxon>
        <taxon>Gammaproteobacteria</taxon>
        <taxon>Enterobacterales</taxon>
        <taxon>Enterobacteriaceae</taxon>
        <taxon>Shigella</taxon>
    </lineage>
</organism>
<dbReference type="EC" id="3.6.1.41" evidence="1"/>
<dbReference type="EMBL" id="CP000034">
    <property type="protein sequence ID" value="ABB60312.1"/>
    <property type="molecule type" value="Genomic_DNA"/>
</dbReference>
<dbReference type="RefSeq" id="WP_000257202.1">
    <property type="nucleotide sequence ID" value="NC_007606.1"/>
</dbReference>
<dbReference type="RefSeq" id="YP_401801.1">
    <property type="nucleotide sequence ID" value="NC_007606.1"/>
</dbReference>
<dbReference type="SMR" id="Q32K45"/>
<dbReference type="STRING" id="300267.SDY_0074"/>
<dbReference type="EnsemblBacteria" id="ABB60312">
    <property type="protein sequence ID" value="ABB60312"/>
    <property type="gene ID" value="SDY_0074"/>
</dbReference>
<dbReference type="KEGG" id="sdy:SDY_0074"/>
<dbReference type="PATRIC" id="fig|300267.13.peg.84"/>
<dbReference type="HOGENOM" id="CLU_056184_2_0_6"/>
<dbReference type="Proteomes" id="UP000002716">
    <property type="component" value="Chromosome"/>
</dbReference>
<dbReference type="GO" id="GO:0008803">
    <property type="term" value="F:bis(5'-nucleosyl)-tetraphosphatase (symmetrical) activity"/>
    <property type="evidence" value="ECO:0007669"/>
    <property type="project" value="UniProtKB-UniRule"/>
</dbReference>
<dbReference type="CDD" id="cd07422">
    <property type="entry name" value="MPP_ApaH"/>
    <property type="match status" value="1"/>
</dbReference>
<dbReference type="FunFam" id="3.60.21.10:FF:000013">
    <property type="entry name" value="Bis(5'-nucleosyl)-tetraphosphatase, symmetrical"/>
    <property type="match status" value="1"/>
</dbReference>
<dbReference type="Gene3D" id="3.60.21.10">
    <property type="match status" value="1"/>
</dbReference>
<dbReference type="HAMAP" id="MF_00199">
    <property type="entry name" value="ApaH"/>
    <property type="match status" value="1"/>
</dbReference>
<dbReference type="InterPro" id="IPR004617">
    <property type="entry name" value="ApaH"/>
</dbReference>
<dbReference type="InterPro" id="IPR004843">
    <property type="entry name" value="Calcineurin-like_PHP_ApaH"/>
</dbReference>
<dbReference type="InterPro" id="IPR029052">
    <property type="entry name" value="Metallo-depent_PP-like"/>
</dbReference>
<dbReference type="NCBIfam" id="TIGR00668">
    <property type="entry name" value="apaH"/>
    <property type="match status" value="1"/>
</dbReference>
<dbReference type="NCBIfam" id="NF001204">
    <property type="entry name" value="PRK00166.1"/>
    <property type="match status" value="1"/>
</dbReference>
<dbReference type="PANTHER" id="PTHR40942">
    <property type="match status" value="1"/>
</dbReference>
<dbReference type="PANTHER" id="PTHR40942:SF4">
    <property type="entry name" value="CYTOCHROME C5"/>
    <property type="match status" value="1"/>
</dbReference>
<dbReference type="Pfam" id="PF00149">
    <property type="entry name" value="Metallophos"/>
    <property type="match status" value="1"/>
</dbReference>
<dbReference type="PIRSF" id="PIRSF000903">
    <property type="entry name" value="B5n-ttraPtase_sm"/>
    <property type="match status" value="1"/>
</dbReference>
<dbReference type="SUPFAM" id="SSF56300">
    <property type="entry name" value="Metallo-dependent phosphatases"/>
    <property type="match status" value="1"/>
</dbReference>
<accession>Q32K45</accession>
<reference key="1">
    <citation type="journal article" date="2005" name="Nucleic Acids Res.">
        <title>Genome dynamics and diversity of Shigella species, the etiologic agents of bacillary dysentery.</title>
        <authorList>
            <person name="Yang F."/>
            <person name="Yang J."/>
            <person name="Zhang X."/>
            <person name="Chen L."/>
            <person name="Jiang Y."/>
            <person name="Yan Y."/>
            <person name="Tang X."/>
            <person name="Wang J."/>
            <person name="Xiong Z."/>
            <person name="Dong J."/>
            <person name="Xue Y."/>
            <person name="Zhu Y."/>
            <person name="Xu X."/>
            <person name="Sun L."/>
            <person name="Chen S."/>
            <person name="Nie H."/>
            <person name="Peng J."/>
            <person name="Xu J."/>
            <person name="Wang Y."/>
            <person name="Yuan Z."/>
            <person name="Wen Y."/>
            <person name="Yao Z."/>
            <person name="Shen Y."/>
            <person name="Qiang B."/>
            <person name="Hou Y."/>
            <person name="Yu J."/>
            <person name="Jin Q."/>
        </authorList>
    </citation>
    <scope>NUCLEOTIDE SEQUENCE [LARGE SCALE GENOMIC DNA]</scope>
    <source>
        <strain>Sd197</strain>
    </source>
</reference>
<protein>
    <recommendedName>
        <fullName evidence="1">Bis(5'-nucleosyl)-tetraphosphatase, symmetrical</fullName>
        <ecNumber evidence="1">3.6.1.41</ecNumber>
    </recommendedName>
    <alternativeName>
        <fullName evidence="1">Ap4A hydrolase</fullName>
    </alternativeName>
    <alternativeName>
        <fullName evidence="1">Diadenosine 5',5'''-P1,P4-tetraphosphate pyrophosphohydrolase</fullName>
    </alternativeName>
    <alternativeName>
        <fullName evidence="1">Diadenosine tetraphosphatase</fullName>
    </alternativeName>
</protein>
<comment type="function">
    <text evidence="1">Hydrolyzes diadenosine 5',5'''-P1,P4-tetraphosphate to yield ADP.</text>
</comment>
<comment type="catalytic activity">
    <reaction evidence="1">
        <text>P(1),P(4)-bis(5'-adenosyl) tetraphosphate + H2O = 2 ADP + 2 H(+)</text>
        <dbReference type="Rhea" id="RHEA:24252"/>
        <dbReference type="ChEBI" id="CHEBI:15377"/>
        <dbReference type="ChEBI" id="CHEBI:15378"/>
        <dbReference type="ChEBI" id="CHEBI:58141"/>
        <dbReference type="ChEBI" id="CHEBI:456216"/>
        <dbReference type="EC" id="3.6.1.41"/>
    </reaction>
</comment>
<comment type="similarity">
    <text evidence="1">Belongs to the Ap4A hydrolase family.</text>
</comment>
<keyword id="KW-0378">Hydrolase</keyword>
<keyword id="KW-1185">Reference proteome</keyword>